<dbReference type="EMBL" id="BC135472">
    <property type="protein sequence ID" value="AAI35473.1"/>
    <property type="molecule type" value="mRNA"/>
</dbReference>
<dbReference type="RefSeq" id="NP_001096264.1">
    <property type="nucleotide sequence ID" value="NM_001102794.2"/>
</dbReference>
<dbReference type="FunCoup" id="A4IHD1">
    <property type="interactions" value="108"/>
</dbReference>
<dbReference type="STRING" id="8364.ENSXETP00000050825"/>
<dbReference type="PaxDb" id="8364-ENSXETP00000013073"/>
<dbReference type="DNASU" id="100124829"/>
<dbReference type="GeneID" id="100124829"/>
<dbReference type="KEGG" id="xtr:100124829"/>
<dbReference type="AGR" id="Xenbase:XB-GENE-954032"/>
<dbReference type="CTD" id="6988"/>
<dbReference type="Xenbase" id="XB-GENE-954032">
    <property type="gene designation" value="tcta"/>
</dbReference>
<dbReference type="eggNOG" id="ENOG502S6IC">
    <property type="taxonomic scope" value="Eukaryota"/>
</dbReference>
<dbReference type="HOGENOM" id="CLU_157357_0_0_1"/>
<dbReference type="InParanoid" id="A4IHD1"/>
<dbReference type="OMA" id="SMWESTS"/>
<dbReference type="OrthoDB" id="9529463at2759"/>
<dbReference type="PhylomeDB" id="A4IHD1"/>
<dbReference type="TreeFam" id="TF330748"/>
<dbReference type="Proteomes" id="UP000008143">
    <property type="component" value="Chromosome 4"/>
</dbReference>
<dbReference type="Bgee" id="ENSXETG00000005948">
    <property type="expression patterns" value="Expressed in skeletal muscle tissue and 14 other cell types or tissues"/>
</dbReference>
<dbReference type="ExpressionAtlas" id="A4IHD1">
    <property type="expression patterns" value="baseline and differential"/>
</dbReference>
<dbReference type="GO" id="GO:0016020">
    <property type="term" value="C:membrane"/>
    <property type="evidence" value="ECO:0007669"/>
    <property type="project" value="UniProtKB-SubCell"/>
</dbReference>
<dbReference type="InterPro" id="IPR016560">
    <property type="entry name" value="TCTA"/>
</dbReference>
<dbReference type="PANTHER" id="PTHR32267">
    <property type="entry name" value="T-CELL LEUKEMIA TRANSLOCATION-ALTERED GENE PROTEIN"/>
    <property type="match status" value="1"/>
</dbReference>
<dbReference type="PANTHER" id="PTHR32267:SF2">
    <property type="entry name" value="T-CELL LEUKEMIA TRANSLOCATION-ALTERED GENE PROTEIN"/>
    <property type="match status" value="1"/>
</dbReference>
<dbReference type="Pfam" id="PF15128">
    <property type="entry name" value="T_cell_tran_alt"/>
    <property type="match status" value="1"/>
</dbReference>
<dbReference type="PIRSF" id="PIRSF009935">
    <property type="entry name" value="TCTA"/>
    <property type="match status" value="1"/>
</dbReference>
<feature type="chain" id="PRO_0000301684" description="T-cell leukemia translocation-altered gene protein homolog">
    <location>
        <begin position="1"/>
        <end position="102"/>
    </location>
</feature>
<feature type="transmembrane region" description="Helical" evidence="1">
    <location>
        <begin position="36"/>
        <end position="56"/>
    </location>
</feature>
<comment type="subcellular location">
    <subcellularLocation>
        <location evidence="2">Membrane</location>
        <topology evidence="2">Single-pass membrane protein</topology>
    </subcellularLocation>
</comment>
<comment type="similarity">
    <text evidence="2">Belongs to the TCTA family.</text>
</comment>
<name>TCTA_XENTR</name>
<proteinExistence type="inferred from homology"/>
<protein>
    <recommendedName>
        <fullName>T-cell leukemia translocation-altered gene protein homolog</fullName>
    </recommendedName>
</protein>
<keyword id="KW-0472">Membrane</keyword>
<keyword id="KW-1185">Reference proteome</keyword>
<keyword id="KW-0812">Transmembrane</keyword>
<keyword id="KW-1133">Transmembrane helix</keyword>
<evidence type="ECO:0000255" key="1"/>
<evidence type="ECO:0000305" key="2"/>
<sequence>MAETWGSEIMTQALGCLQAFSSEFALEWENSDMKAAIFKLLLGWIVLSLTAIHLAWKSYGPTVNSIYYRQGMGGQNGGTPEYPARFPIWESSSTESLKRHQE</sequence>
<reference key="1">
    <citation type="submission" date="2007-03" db="EMBL/GenBank/DDBJ databases">
        <authorList>
            <consortium name="NIH - Xenopus Gene Collection (XGC) project"/>
        </authorList>
    </citation>
    <scope>NUCLEOTIDE SEQUENCE [LARGE SCALE MRNA]</scope>
</reference>
<organism>
    <name type="scientific">Xenopus tropicalis</name>
    <name type="common">Western clawed frog</name>
    <name type="synonym">Silurana tropicalis</name>
    <dbReference type="NCBI Taxonomy" id="8364"/>
    <lineage>
        <taxon>Eukaryota</taxon>
        <taxon>Metazoa</taxon>
        <taxon>Chordata</taxon>
        <taxon>Craniata</taxon>
        <taxon>Vertebrata</taxon>
        <taxon>Euteleostomi</taxon>
        <taxon>Amphibia</taxon>
        <taxon>Batrachia</taxon>
        <taxon>Anura</taxon>
        <taxon>Pipoidea</taxon>
        <taxon>Pipidae</taxon>
        <taxon>Xenopodinae</taxon>
        <taxon>Xenopus</taxon>
        <taxon>Silurana</taxon>
    </lineage>
</organism>
<gene>
    <name type="primary">tcta</name>
</gene>
<accession>A4IHD1</accession>